<keyword id="KW-0030">Aminoacyl-tRNA synthetase</keyword>
<keyword id="KW-0067">ATP-binding</keyword>
<keyword id="KW-0963">Cytoplasm</keyword>
<keyword id="KW-0436">Ligase</keyword>
<keyword id="KW-0479">Metal-binding</keyword>
<keyword id="KW-0547">Nucleotide-binding</keyword>
<keyword id="KW-0648">Protein biosynthesis</keyword>
<keyword id="KW-0694">RNA-binding</keyword>
<keyword id="KW-0820">tRNA-binding</keyword>
<keyword id="KW-0862">Zinc</keyword>
<feature type="chain" id="PRO_1000020405" description="Threonine--tRNA ligase">
    <location>
        <begin position="1"/>
        <end position="612"/>
    </location>
</feature>
<feature type="region of interest" description="Catalytic" evidence="1">
    <location>
        <begin position="218"/>
        <end position="509"/>
    </location>
</feature>
<feature type="binding site" evidence="1">
    <location>
        <position position="310"/>
    </location>
    <ligand>
        <name>Zn(2+)</name>
        <dbReference type="ChEBI" id="CHEBI:29105"/>
    </ligand>
</feature>
<feature type="binding site" evidence="1">
    <location>
        <position position="361"/>
    </location>
    <ligand>
        <name>Zn(2+)</name>
        <dbReference type="ChEBI" id="CHEBI:29105"/>
    </ligand>
</feature>
<feature type="binding site" evidence="1">
    <location>
        <position position="486"/>
    </location>
    <ligand>
        <name>Zn(2+)</name>
        <dbReference type="ChEBI" id="CHEBI:29105"/>
    </ligand>
</feature>
<name>SYT_HELPH</name>
<proteinExistence type="inferred from homology"/>
<accession>Q1CV33</accession>
<reference key="1">
    <citation type="journal article" date="2006" name="Proc. Natl. Acad. Sci. U.S.A.">
        <title>The complete genome sequence of a chronic atrophic gastritis Helicobacter pylori strain: evolution during disease progression.</title>
        <authorList>
            <person name="Oh J.D."/>
            <person name="Kling-Baeckhed H."/>
            <person name="Giannakis M."/>
            <person name="Xu J."/>
            <person name="Fulton R.S."/>
            <person name="Fulton L.A."/>
            <person name="Cordum H.S."/>
            <person name="Wang C."/>
            <person name="Elliott G."/>
            <person name="Edwards J."/>
            <person name="Mardis E.R."/>
            <person name="Engstrand L.G."/>
            <person name="Gordon J.I."/>
        </authorList>
    </citation>
    <scope>NUCLEOTIDE SEQUENCE [LARGE SCALE GENOMIC DNA]</scope>
    <source>
        <strain>HPAG1</strain>
    </source>
</reference>
<evidence type="ECO:0000255" key="1">
    <source>
        <dbReference type="HAMAP-Rule" id="MF_00184"/>
    </source>
</evidence>
<gene>
    <name evidence="1" type="primary">thrS</name>
    <name type="ordered locus">HPAG1_0122</name>
</gene>
<comment type="function">
    <text evidence="1">Catalyzes the attachment of threonine to tRNA(Thr) in a two-step reaction: L-threonine is first activated by ATP to form Thr-AMP and then transferred to the acceptor end of tRNA(Thr). Also edits incorrectly charged L-seryl-tRNA(Thr).</text>
</comment>
<comment type="catalytic activity">
    <reaction evidence="1">
        <text>tRNA(Thr) + L-threonine + ATP = L-threonyl-tRNA(Thr) + AMP + diphosphate + H(+)</text>
        <dbReference type="Rhea" id="RHEA:24624"/>
        <dbReference type="Rhea" id="RHEA-COMP:9670"/>
        <dbReference type="Rhea" id="RHEA-COMP:9704"/>
        <dbReference type="ChEBI" id="CHEBI:15378"/>
        <dbReference type="ChEBI" id="CHEBI:30616"/>
        <dbReference type="ChEBI" id="CHEBI:33019"/>
        <dbReference type="ChEBI" id="CHEBI:57926"/>
        <dbReference type="ChEBI" id="CHEBI:78442"/>
        <dbReference type="ChEBI" id="CHEBI:78534"/>
        <dbReference type="ChEBI" id="CHEBI:456215"/>
        <dbReference type="EC" id="6.1.1.3"/>
    </reaction>
</comment>
<comment type="cofactor">
    <cofactor evidence="1">
        <name>Zn(2+)</name>
        <dbReference type="ChEBI" id="CHEBI:29105"/>
    </cofactor>
    <text evidence="1">Binds 1 zinc ion per subunit.</text>
</comment>
<comment type="subunit">
    <text evidence="1">Homodimer.</text>
</comment>
<comment type="subcellular location">
    <subcellularLocation>
        <location evidence="1">Cytoplasm</location>
    </subcellularLocation>
</comment>
<comment type="similarity">
    <text evidence="1">Belongs to the class-II aminoacyl-tRNA synthetase family.</text>
</comment>
<dbReference type="EC" id="6.1.1.3" evidence="1"/>
<dbReference type="EMBL" id="CP000241">
    <property type="protein sequence ID" value="ABF84189.1"/>
    <property type="molecule type" value="Genomic_DNA"/>
</dbReference>
<dbReference type="RefSeq" id="WP_001271853.1">
    <property type="nucleotide sequence ID" value="NC_008086.1"/>
</dbReference>
<dbReference type="SMR" id="Q1CV33"/>
<dbReference type="KEGG" id="hpa:HPAG1_0122"/>
<dbReference type="HOGENOM" id="CLU_008554_0_1_7"/>
<dbReference type="GO" id="GO:0005829">
    <property type="term" value="C:cytosol"/>
    <property type="evidence" value="ECO:0007669"/>
    <property type="project" value="TreeGrafter"/>
</dbReference>
<dbReference type="GO" id="GO:0005524">
    <property type="term" value="F:ATP binding"/>
    <property type="evidence" value="ECO:0007669"/>
    <property type="project" value="UniProtKB-UniRule"/>
</dbReference>
<dbReference type="GO" id="GO:0046872">
    <property type="term" value="F:metal ion binding"/>
    <property type="evidence" value="ECO:0007669"/>
    <property type="project" value="UniProtKB-KW"/>
</dbReference>
<dbReference type="GO" id="GO:0004829">
    <property type="term" value="F:threonine-tRNA ligase activity"/>
    <property type="evidence" value="ECO:0007669"/>
    <property type="project" value="UniProtKB-UniRule"/>
</dbReference>
<dbReference type="GO" id="GO:0000049">
    <property type="term" value="F:tRNA binding"/>
    <property type="evidence" value="ECO:0007669"/>
    <property type="project" value="UniProtKB-KW"/>
</dbReference>
<dbReference type="GO" id="GO:0006435">
    <property type="term" value="P:threonyl-tRNA aminoacylation"/>
    <property type="evidence" value="ECO:0007669"/>
    <property type="project" value="UniProtKB-UniRule"/>
</dbReference>
<dbReference type="CDD" id="cd00860">
    <property type="entry name" value="ThrRS_anticodon"/>
    <property type="match status" value="1"/>
</dbReference>
<dbReference type="CDD" id="cd00771">
    <property type="entry name" value="ThrRS_core"/>
    <property type="match status" value="1"/>
</dbReference>
<dbReference type="FunFam" id="3.30.930.10:FF:000019">
    <property type="entry name" value="Threonine--tRNA ligase"/>
    <property type="match status" value="1"/>
</dbReference>
<dbReference type="FunFam" id="3.30.980.10:FF:000005">
    <property type="entry name" value="Threonyl-tRNA synthetase, mitochondrial"/>
    <property type="match status" value="1"/>
</dbReference>
<dbReference type="Gene3D" id="3.30.54.20">
    <property type="match status" value="1"/>
</dbReference>
<dbReference type="Gene3D" id="3.40.50.800">
    <property type="entry name" value="Anticodon-binding domain"/>
    <property type="match status" value="1"/>
</dbReference>
<dbReference type="Gene3D" id="3.30.930.10">
    <property type="entry name" value="Bira Bifunctional Protein, Domain 2"/>
    <property type="match status" value="1"/>
</dbReference>
<dbReference type="Gene3D" id="3.30.980.10">
    <property type="entry name" value="Threonyl-trna Synthetase, Chain A, domain 2"/>
    <property type="match status" value="1"/>
</dbReference>
<dbReference type="HAMAP" id="MF_00184">
    <property type="entry name" value="Thr_tRNA_synth"/>
    <property type="match status" value="1"/>
</dbReference>
<dbReference type="InterPro" id="IPR002314">
    <property type="entry name" value="aa-tRNA-synt_IIb"/>
</dbReference>
<dbReference type="InterPro" id="IPR006195">
    <property type="entry name" value="aa-tRNA-synth_II"/>
</dbReference>
<dbReference type="InterPro" id="IPR045864">
    <property type="entry name" value="aa-tRNA-synth_II/BPL/LPL"/>
</dbReference>
<dbReference type="InterPro" id="IPR004154">
    <property type="entry name" value="Anticodon-bd"/>
</dbReference>
<dbReference type="InterPro" id="IPR036621">
    <property type="entry name" value="Anticodon-bd_dom_sf"/>
</dbReference>
<dbReference type="InterPro" id="IPR002320">
    <property type="entry name" value="Thr-tRNA-ligase_IIa"/>
</dbReference>
<dbReference type="InterPro" id="IPR018163">
    <property type="entry name" value="Thr/Ala-tRNA-synth_IIc_edit"/>
</dbReference>
<dbReference type="InterPro" id="IPR047246">
    <property type="entry name" value="ThrRS_anticodon"/>
</dbReference>
<dbReference type="InterPro" id="IPR033728">
    <property type="entry name" value="ThrRS_core"/>
</dbReference>
<dbReference type="InterPro" id="IPR012947">
    <property type="entry name" value="tRNA_SAD"/>
</dbReference>
<dbReference type="NCBIfam" id="TIGR00418">
    <property type="entry name" value="thrS"/>
    <property type="match status" value="1"/>
</dbReference>
<dbReference type="PANTHER" id="PTHR11451:SF44">
    <property type="entry name" value="THREONINE--TRNA LIGASE, CHLOROPLASTIC_MITOCHONDRIAL 2"/>
    <property type="match status" value="1"/>
</dbReference>
<dbReference type="PANTHER" id="PTHR11451">
    <property type="entry name" value="THREONINE-TRNA LIGASE"/>
    <property type="match status" value="1"/>
</dbReference>
<dbReference type="Pfam" id="PF03129">
    <property type="entry name" value="HGTP_anticodon"/>
    <property type="match status" value="1"/>
</dbReference>
<dbReference type="Pfam" id="PF00587">
    <property type="entry name" value="tRNA-synt_2b"/>
    <property type="match status" value="1"/>
</dbReference>
<dbReference type="Pfam" id="PF07973">
    <property type="entry name" value="tRNA_SAD"/>
    <property type="match status" value="1"/>
</dbReference>
<dbReference type="PRINTS" id="PR01047">
    <property type="entry name" value="TRNASYNTHTHR"/>
</dbReference>
<dbReference type="SMART" id="SM00863">
    <property type="entry name" value="tRNA_SAD"/>
    <property type="match status" value="1"/>
</dbReference>
<dbReference type="SUPFAM" id="SSF52954">
    <property type="entry name" value="Class II aaRS ABD-related"/>
    <property type="match status" value="1"/>
</dbReference>
<dbReference type="SUPFAM" id="SSF55681">
    <property type="entry name" value="Class II aaRS and biotin synthetases"/>
    <property type="match status" value="1"/>
</dbReference>
<dbReference type="SUPFAM" id="SSF55186">
    <property type="entry name" value="ThrRS/AlaRS common domain"/>
    <property type="match status" value="1"/>
</dbReference>
<dbReference type="PROSITE" id="PS50862">
    <property type="entry name" value="AA_TRNA_LIGASE_II"/>
    <property type="match status" value="1"/>
</dbReference>
<protein>
    <recommendedName>
        <fullName evidence="1">Threonine--tRNA ligase</fullName>
        <ecNumber evidence="1">6.1.1.3</ecNumber>
    </recommendedName>
    <alternativeName>
        <fullName evidence="1">Threonyl-tRNA synthetase</fullName>
        <shortName evidence="1">ThrRS</shortName>
    </alternativeName>
</protein>
<organism>
    <name type="scientific">Helicobacter pylori (strain HPAG1)</name>
    <dbReference type="NCBI Taxonomy" id="357544"/>
    <lineage>
        <taxon>Bacteria</taxon>
        <taxon>Pseudomonadati</taxon>
        <taxon>Campylobacterota</taxon>
        <taxon>Epsilonproteobacteria</taxon>
        <taxon>Campylobacterales</taxon>
        <taxon>Helicobacteraceae</taxon>
        <taxon>Helicobacter</taxon>
    </lineage>
</organism>
<sequence length="612" mass="70306">MSAELIAVYKDEQIIDLESAKVLGLSDGIKALNGTEPIYFDDSPLALEVIRHSCAHLLAQSLKALYPDAKFFVGPVVEEGFYYDFKTASKISEEDLPKIEAKMKEFAKSKLAITKETLTREQALERFKGDELKHAVMSKISGDIFGVYKQGEFEDLCKGPHLPNTRFLNHFKLTKLAGAYLGGDENNEMLIRIYGIAFATKEGLKDYLFQIEEAKKRDHRKLGVELGLFSFDDEIGAGLPLWLPKGARLRKRIEDLLSQALLLRGYEPVKGPEILKSDVWKISGHYDNYKENMYFTTIDEQEYGIKPMNCVGHIKVYQSALHSYRDLPLRFYEYGVVHRHEKSGVLHGLLRVREFTQDDAHIFCSFEQIQSEVSAILDFTHKIMQAFDFSYEMELSTRPAKSIGDDEVWEKATNALKEALKEHRIDYKIDEGGGAFYGPKIDIKITDALRRKWQCGTIQVDMNLPERFKLAFTNERNHAEQPVMIHRAILGSFERFIAILSEHFGGNFPFFVAPTQIALIPINEEHHVFALKLKEELKKRDIFVEVLDKNDSLNKKVRLAEKQKIPMILVLGNEEVETEILSIRDREKQAQYKMPLKEFLNMVESKMQEVSF</sequence>